<name>TRPD_STRPJ</name>
<comment type="function">
    <text evidence="1">Catalyzes the transfer of the phosphoribosyl group of 5-phosphorylribose-1-pyrophosphate (PRPP) to anthranilate to yield N-(5'-phosphoribosyl)-anthranilate (PRA).</text>
</comment>
<comment type="catalytic activity">
    <reaction evidence="1">
        <text>N-(5-phospho-beta-D-ribosyl)anthranilate + diphosphate = 5-phospho-alpha-D-ribose 1-diphosphate + anthranilate</text>
        <dbReference type="Rhea" id="RHEA:11768"/>
        <dbReference type="ChEBI" id="CHEBI:16567"/>
        <dbReference type="ChEBI" id="CHEBI:18277"/>
        <dbReference type="ChEBI" id="CHEBI:33019"/>
        <dbReference type="ChEBI" id="CHEBI:58017"/>
        <dbReference type="EC" id="2.4.2.18"/>
    </reaction>
</comment>
<comment type="cofactor">
    <cofactor evidence="1">
        <name>Mg(2+)</name>
        <dbReference type="ChEBI" id="CHEBI:18420"/>
    </cofactor>
    <text evidence="1">Binds 2 magnesium ions per monomer.</text>
</comment>
<comment type="pathway">
    <text evidence="1">Amino-acid biosynthesis; L-tryptophan biosynthesis; L-tryptophan from chorismate: step 2/5.</text>
</comment>
<comment type="subunit">
    <text evidence="1">Homodimer.</text>
</comment>
<comment type="similarity">
    <text evidence="1">Belongs to the anthranilate phosphoribosyltransferase family.</text>
</comment>
<proteinExistence type="inferred from homology"/>
<feature type="chain" id="PRO_1000198841" description="Anthranilate phosphoribosyltransferase">
    <location>
        <begin position="1"/>
        <end position="334"/>
    </location>
</feature>
<feature type="binding site" evidence="1">
    <location>
        <position position="79"/>
    </location>
    <ligand>
        <name>5-phospho-alpha-D-ribose 1-diphosphate</name>
        <dbReference type="ChEBI" id="CHEBI:58017"/>
    </ligand>
</feature>
<feature type="binding site" evidence="1">
    <location>
        <position position="79"/>
    </location>
    <ligand>
        <name>anthranilate</name>
        <dbReference type="ChEBI" id="CHEBI:16567"/>
        <label>1</label>
    </ligand>
</feature>
<feature type="binding site" evidence="1">
    <location>
        <begin position="82"/>
        <end position="83"/>
    </location>
    <ligand>
        <name>5-phospho-alpha-D-ribose 1-diphosphate</name>
        <dbReference type="ChEBI" id="CHEBI:58017"/>
    </ligand>
</feature>
<feature type="binding site" evidence="1">
    <location>
        <position position="87"/>
    </location>
    <ligand>
        <name>5-phospho-alpha-D-ribose 1-diphosphate</name>
        <dbReference type="ChEBI" id="CHEBI:58017"/>
    </ligand>
</feature>
<feature type="binding site" evidence="1">
    <location>
        <begin position="89"/>
        <end position="92"/>
    </location>
    <ligand>
        <name>5-phospho-alpha-D-ribose 1-diphosphate</name>
        <dbReference type="ChEBI" id="CHEBI:58017"/>
    </ligand>
</feature>
<feature type="binding site" evidence="1">
    <location>
        <position position="91"/>
    </location>
    <ligand>
        <name>Mg(2+)</name>
        <dbReference type="ChEBI" id="CHEBI:18420"/>
        <label>1</label>
    </ligand>
</feature>
<feature type="binding site" evidence="1">
    <location>
        <begin position="107"/>
        <end position="115"/>
    </location>
    <ligand>
        <name>5-phospho-alpha-D-ribose 1-diphosphate</name>
        <dbReference type="ChEBI" id="CHEBI:58017"/>
    </ligand>
</feature>
<feature type="binding site" evidence="1">
    <location>
        <position position="110"/>
    </location>
    <ligand>
        <name>anthranilate</name>
        <dbReference type="ChEBI" id="CHEBI:16567"/>
        <label>1</label>
    </ligand>
</feature>
<feature type="binding site" evidence="1">
    <location>
        <position position="119"/>
    </location>
    <ligand>
        <name>5-phospho-alpha-D-ribose 1-diphosphate</name>
        <dbReference type="ChEBI" id="CHEBI:58017"/>
    </ligand>
</feature>
<feature type="binding site" evidence="1">
    <location>
        <position position="165"/>
    </location>
    <ligand>
        <name>anthranilate</name>
        <dbReference type="ChEBI" id="CHEBI:16567"/>
        <label>2</label>
    </ligand>
</feature>
<feature type="binding site" evidence="1">
    <location>
        <position position="224"/>
    </location>
    <ligand>
        <name>Mg(2+)</name>
        <dbReference type="ChEBI" id="CHEBI:18420"/>
        <label>2</label>
    </ligand>
</feature>
<feature type="binding site" evidence="1">
    <location>
        <position position="225"/>
    </location>
    <ligand>
        <name>Mg(2+)</name>
        <dbReference type="ChEBI" id="CHEBI:18420"/>
        <label>1</label>
    </ligand>
</feature>
<feature type="binding site" evidence="1">
    <location>
        <position position="225"/>
    </location>
    <ligand>
        <name>Mg(2+)</name>
        <dbReference type="ChEBI" id="CHEBI:18420"/>
        <label>2</label>
    </ligand>
</feature>
<gene>
    <name evidence="1" type="primary">trpD</name>
    <name type="ordered locus">SPN23F18350</name>
</gene>
<organism>
    <name type="scientific">Streptococcus pneumoniae (strain ATCC 700669 / Spain 23F-1)</name>
    <dbReference type="NCBI Taxonomy" id="561276"/>
    <lineage>
        <taxon>Bacteria</taxon>
        <taxon>Bacillati</taxon>
        <taxon>Bacillota</taxon>
        <taxon>Bacilli</taxon>
        <taxon>Lactobacillales</taxon>
        <taxon>Streptococcaceae</taxon>
        <taxon>Streptococcus</taxon>
    </lineage>
</organism>
<evidence type="ECO:0000255" key="1">
    <source>
        <dbReference type="HAMAP-Rule" id="MF_00211"/>
    </source>
</evidence>
<dbReference type="EC" id="2.4.2.18" evidence="1"/>
<dbReference type="EMBL" id="FM211187">
    <property type="protein sequence ID" value="CAR69599.1"/>
    <property type="molecule type" value="Genomic_DNA"/>
</dbReference>
<dbReference type="RefSeq" id="WP_000658682.1">
    <property type="nucleotide sequence ID" value="NC_011900.1"/>
</dbReference>
<dbReference type="SMR" id="B8ZN62"/>
<dbReference type="KEGG" id="sne:SPN23F18350"/>
<dbReference type="HOGENOM" id="CLU_034315_2_1_9"/>
<dbReference type="UniPathway" id="UPA00035">
    <property type="reaction ID" value="UER00041"/>
</dbReference>
<dbReference type="GO" id="GO:0005829">
    <property type="term" value="C:cytosol"/>
    <property type="evidence" value="ECO:0007669"/>
    <property type="project" value="TreeGrafter"/>
</dbReference>
<dbReference type="GO" id="GO:0004048">
    <property type="term" value="F:anthranilate phosphoribosyltransferase activity"/>
    <property type="evidence" value="ECO:0007669"/>
    <property type="project" value="UniProtKB-UniRule"/>
</dbReference>
<dbReference type="GO" id="GO:0000287">
    <property type="term" value="F:magnesium ion binding"/>
    <property type="evidence" value="ECO:0007669"/>
    <property type="project" value="UniProtKB-UniRule"/>
</dbReference>
<dbReference type="GO" id="GO:0000162">
    <property type="term" value="P:L-tryptophan biosynthetic process"/>
    <property type="evidence" value="ECO:0007669"/>
    <property type="project" value="UniProtKB-UniRule"/>
</dbReference>
<dbReference type="FunFam" id="3.40.1030.10:FF:000002">
    <property type="entry name" value="Anthranilate phosphoribosyltransferase"/>
    <property type="match status" value="1"/>
</dbReference>
<dbReference type="Gene3D" id="3.40.1030.10">
    <property type="entry name" value="Nucleoside phosphorylase/phosphoribosyltransferase catalytic domain"/>
    <property type="match status" value="1"/>
</dbReference>
<dbReference type="Gene3D" id="1.20.970.10">
    <property type="entry name" value="Transferase, Pyrimidine Nucleoside Phosphorylase, Chain C"/>
    <property type="match status" value="1"/>
</dbReference>
<dbReference type="HAMAP" id="MF_00211">
    <property type="entry name" value="TrpD"/>
    <property type="match status" value="1"/>
</dbReference>
<dbReference type="InterPro" id="IPR005940">
    <property type="entry name" value="Anthranilate_Pribosyl_Tfrase"/>
</dbReference>
<dbReference type="InterPro" id="IPR000312">
    <property type="entry name" value="Glycosyl_Trfase_fam3"/>
</dbReference>
<dbReference type="InterPro" id="IPR017459">
    <property type="entry name" value="Glycosyl_Trfase_fam3_N_dom"/>
</dbReference>
<dbReference type="InterPro" id="IPR036320">
    <property type="entry name" value="Glycosyl_Trfase_fam3_N_dom_sf"/>
</dbReference>
<dbReference type="InterPro" id="IPR035902">
    <property type="entry name" value="Nuc_phospho_transferase"/>
</dbReference>
<dbReference type="NCBIfam" id="TIGR01245">
    <property type="entry name" value="trpD"/>
    <property type="match status" value="1"/>
</dbReference>
<dbReference type="PANTHER" id="PTHR43285">
    <property type="entry name" value="ANTHRANILATE PHOSPHORIBOSYLTRANSFERASE"/>
    <property type="match status" value="1"/>
</dbReference>
<dbReference type="PANTHER" id="PTHR43285:SF2">
    <property type="entry name" value="ANTHRANILATE PHOSPHORIBOSYLTRANSFERASE"/>
    <property type="match status" value="1"/>
</dbReference>
<dbReference type="Pfam" id="PF02885">
    <property type="entry name" value="Glycos_trans_3N"/>
    <property type="match status" value="1"/>
</dbReference>
<dbReference type="Pfam" id="PF00591">
    <property type="entry name" value="Glycos_transf_3"/>
    <property type="match status" value="1"/>
</dbReference>
<dbReference type="SUPFAM" id="SSF52418">
    <property type="entry name" value="Nucleoside phosphorylase/phosphoribosyltransferase catalytic domain"/>
    <property type="match status" value="1"/>
</dbReference>
<dbReference type="SUPFAM" id="SSF47648">
    <property type="entry name" value="Nucleoside phosphorylase/phosphoribosyltransferase N-terminal domain"/>
    <property type="match status" value="1"/>
</dbReference>
<accession>B8ZN62</accession>
<keyword id="KW-0028">Amino-acid biosynthesis</keyword>
<keyword id="KW-0057">Aromatic amino acid biosynthesis</keyword>
<keyword id="KW-0328">Glycosyltransferase</keyword>
<keyword id="KW-0460">Magnesium</keyword>
<keyword id="KW-0479">Metal-binding</keyword>
<keyword id="KW-0808">Transferase</keyword>
<keyword id="KW-0822">Tryptophan biosynthesis</keyword>
<sequence>MKEIIEKLAKFENLSGVEMTDVIERIVTGRVTEAQIASLLLALKMKGETPEERTAIAQVMRGHAQHIPTEIHDAMDNCGTGGDKSFSFNISTTAAFVLAGGGIHMAKHGNRSISSKSGSADVLEALGINLDLKPAELGKVFDKTGIVFLFAKNMHPAMKYIMPARLELGIPTIMNLTGPLIHPMALETQLLGISRPELLESTAQVLKNMGRKRAIVVAGPEGLDEAGLNGTTKIALLENGEISLSSFTPEDLGMEDYAMEDIRGGNAQENAEILLSVLKNEASPFLETTVLNAGLGFYANGKIDSIKEGVALARQVIARGKALEKLRLLQEYQK</sequence>
<protein>
    <recommendedName>
        <fullName evidence="1">Anthranilate phosphoribosyltransferase</fullName>
        <ecNumber evidence="1">2.4.2.18</ecNumber>
    </recommendedName>
</protein>
<reference key="1">
    <citation type="journal article" date="2009" name="J. Bacteriol.">
        <title>Role of conjugative elements in the evolution of the multidrug-resistant pandemic clone Streptococcus pneumoniae Spain23F ST81.</title>
        <authorList>
            <person name="Croucher N.J."/>
            <person name="Walker D."/>
            <person name="Romero P."/>
            <person name="Lennard N."/>
            <person name="Paterson G.K."/>
            <person name="Bason N.C."/>
            <person name="Mitchell A.M."/>
            <person name="Quail M.A."/>
            <person name="Andrew P.W."/>
            <person name="Parkhill J."/>
            <person name="Bentley S.D."/>
            <person name="Mitchell T.J."/>
        </authorList>
    </citation>
    <scope>NUCLEOTIDE SEQUENCE [LARGE SCALE GENOMIC DNA]</scope>
    <source>
        <strain>ATCC 700669 / Spain 23F-1</strain>
    </source>
</reference>